<sequence length="938" mass="105732">MIDYKNTLNLPETGFPMRGDLAKREPDMLKNWYDKNLYQKVRESSKGKKSFILHDGPPYANGNIHIGHAVNKILKDIIMKSKTALGFDTPYVPGWDCHGLPIELKVEGIVGKPNEKISAAEFRQACRDYAKEQVEGQKADFIRMGILGDWDNPYLTMNFDTEAHIIRTLGKVIANGHLYKGSKPVHWCLDCGSSLAEAEVEYEDKVSPSIYVRFKAVDSVAVEAKFNAVGKGSGQISAVIWTTTPWTLPSNKAISINPEFDYQLVQFGGERVVLVKDLVESVQKAVGIESVEVLGEVKGDALELMQFQHPFYDYSVPLILGDHVTTDGGTGLVHTAPDHGQDDFVVSKKYNIEMAGLVANDGKFISSTPFFAGLGVFESNEKVLEKLKEVGALLKLERIKHSYPHCWRHKTPIIFRATPQWFIGMETQGLREQALGEIKSVRWIPSWGEARIDTMVANRPDWCISRQRTWGVPMTMFVHNETEELHPRTLEILESVAKRVEEKGIQAWWDLDPVEVLGEEDAKNYRKVPDTLDVWFDSGSTYASVVEARPEFNGNSTDMYLEGSDQHRGWFMSSLMLSTATNGKAPYKQVLTHGFVVDEKGRKMSKSLGNVIVPSEVWNKNGADILRLWVASTDYTGEIAVSHNILNSAGESYRRIRNTARFLLANLNGFDPKRDLVKPEEMIALDRWAVSCALEAQNDIKEAYDNYQFHTVVQRLMRFCSIEMGSFYLDIIKDRQYTTKADSLARRSCQTALWHIAEALVRWMAPILSFTADEIWSYLPQVEGRSEFVFTEEFYEGLFGLTEADKLDDAYWQQILKVRAESNRVLEQARKDKVIGSGLEAKVTLYANNEIRAMLEQLGNELRFVLITSQAIIKPLSEADVAEGEMAGLAVKVERAEGEKCPRCWHFATDIGTHTEHSSVCGRCVENVAGEGEKRSFA</sequence>
<evidence type="ECO:0000255" key="1">
    <source>
        <dbReference type="HAMAP-Rule" id="MF_02002"/>
    </source>
</evidence>
<comment type="function">
    <text evidence="1">Catalyzes the attachment of isoleucine to tRNA(Ile). As IleRS can inadvertently accommodate and process structurally similar amino acids such as valine, to avoid such errors it has two additional distinct tRNA(Ile)-dependent editing activities. One activity is designated as 'pretransfer' editing and involves the hydrolysis of activated Val-AMP. The other activity is designated 'posttransfer' editing and involves deacylation of mischarged Val-tRNA(Ile).</text>
</comment>
<comment type="catalytic activity">
    <reaction evidence="1">
        <text>tRNA(Ile) + L-isoleucine + ATP = L-isoleucyl-tRNA(Ile) + AMP + diphosphate</text>
        <dbReference type="Rhea" id="RHEA:11060"/>
        <dbReference type="Rhea" id="RHEA-COMP:9666"/>
        <dbReference type="Rhea" id="RHEA-COMP:9695"/>
        <dbReference type="ChEBI" id="CHEBI:30616"/>
        <dbReference type="ChEBI" id="CHEBI:33019"/>
        <dbReference type="ChEBI" id="CHEBI:58045"/>
        <dbReference type="ChEBI" id="CHEBI:78442"/>
        <dbReference type="ChEBI" id="CHEBI:78528"/>
        <dbReference type="ChEBI" id="CHEBI:456215"/>
        <dbReference type="EC" id="6.1.1.5"/>
    </reaction>
</comment>
<comment type="cofactor">
    <cofactor evidence="1">
        <name>Zn(2+)</name>
        <dbReference type="ChEBI" id="CHEBI:29105"/>
    </cofactor>
    <text evidence="1">Binds 1 zinc ion per subunit.</text>
</comment>
<comment type="subunit">
    <text evidence="1">Monomer.</text>
</comment>
<comment type="subcellular location">
    <subcellularLocation>
        <location evidence="1">Cytoplasm</location>
    </subcellularLocation>
</comment>
<comment type="domain">
    <text evidence="1">IleRS has two distinct active sites: one for aminoacylation and one for editing. The misactivated valine is translocated from the active site to the editing site, which sterically excludes the correctly activated isoleucine. The single editing site contains two valyl binding pockets, one specific for each substrate (Val-AMP or Val-tRNA(Ile)).</text>
</comment>
<comment type="similarity">
    <text evidence="1">Belongs to the class-I aminoacyl-tRNA synthetase family. IleS type 1 subfamily.</text>
</comment>
<dbReference type="EC" id="6.1.1.5" evidence="1"/>
<dbReference type="EMBL" id="CP001091">
    <property type="protein sequence ID" value="ACE60696.1"/>
    <property type="molecule type" value="Genomic_DNA"/>
</dbReference>
<dbReference type="RefSeq" id="WP_005616527.1">
    <property type="nucleotide sequence ID" value="NC_010939.1"/>
</dbReference>
<dbReference type="SMR" id="B3GZN4"/>
<dbReference type="KEGG" id="apa:APP7_0044"/>
<dbReference type="HOGENOM" id="CLU_001493_7_1_6"/>
<dbReference type="Proteomes" id="UP000001226">
    <property type="component" value="Chromosome"/>
</dbReference>
<dbReference type="GO" id="GO:0005829">
    <property type="term" value="C:cytosol"/>
    <property type="evidence" value="ECO:0007669"/>
    <property type="project" value="TreeGrafter"/>
</dbReference>
<dbReference type="GO" id="GO:0002161">
    <property type="term" value="F:aminoacyl-tRNA deacylase activity"/>
    <property type="evidence" value="ECO:0007669"/>
    <property type="project" value="InterPro"/>
</dbReference>
<dbReference type="GO" id="GO:0005524">
    <property type="term" value="F:ATP binding"/>
    <property type="evidence" value="ECO:0007669"/>
    <property type="project" value="UniProtKB-UniRule"/>
</dbReference>
<dbReference type="GO" id="GO:0004822">
    <property type="term" value="F:isoleucine-tRNA ligase activity"/>
    <property type="evidence" value="ECO:0007669"/>
    <property type="project" value="UniProtKB-UniRule"/>
</dbReference>
<dbReference type="GO" id="GO:0000049">
    <property type="term" value="F:tRNA binding"/>
    <property type="evidence" value="ECO:0007669"/>
    <property type="project" value="InterPro"/>
</dbReference>
<dbReference type="GO" id="GO:0008270">
    <property type="term" value="F:zinc ion binding"/>
    <property type="evidence" value="ECO:0007669"/>
    <property type="project" value="UniProtKB-UniRule"/>
</dbReference>
<dbReference type="GO" id="GO:0006428">
    <property type="term" value="P:isoleucyl-tRNA aminoacylation"/>
    <property type="evidence" value="ECO:0007669"/>
    <property type="project" value="UniProtKB-UniRule"/>
</dbReference>
<dbReference type="CDD" id="cd07960">
    <property type="entry name" value="Anticodon_Ia_Ile_BEm"/>
    <property type="match status" value="1"/>
</dbReference>
<dbReference type="CDD" id="cd00818">
    <property type="entry name" value="IleRS_core"/>
    <property type="match status" value="1"/>
</dbReference>
<dbReference type="FunFam" id="1.10.730.20:FF:000001">
    <property type="entry name" value="Isoleucine--tRNA ligase"/>
    <property type="match status" value="1"/>
</dbReference>
<dbReference type="FunFam" id="3.40.50.620:FF:000042">
    <property type="entry name" value="Isoleucine--tRNA ligase"/>
    <property type="match status" value="1"/>
</dbReference>
<dbReference type="FunFam" id="3.40.50.620:FF:000048">
    <property type="entry name" value="Isoleucine--tRNA ligase"/>
    <property type="match status" value="1"/>
</dbReference>
<dbReference type="Gene3D" id="1.10.730.20">
    <property type="match status" value="1"/>
</dbReference>
<dbReference type="Gene3D" id="3.40.50.620">
    <property type="entry name" value="HUPs"/>
    <property type="match status" value="2"/>
</dbReference>
<dbReference type="Gene3D" id="3.90.740.10">
    <property type="entry name" value="Valyl/Leucyl/Isoleucyl-tRNA synthetase, editing domain"/>
    <property type="match status" value="1"/>
</dbReference>
<dbReference type="HAMAP" id="MF_02002">
    <property type="entry name" value="Ile_tRNA_synth_type1"/>
    <property type="match status" value="1"/>
</dbReference>
<dbReference type="InterPro" id="IPR001412">
    <property type="entry name" value="aa-tRNA-synth_I_CS"/>
</dbReference>
<dbReference type="InterPro" id="IPR002300">
    <property type="entry name" value="aa-tRNA-synth_Ia"/>
</dbReference>
<dbReference type="InterPro" id="IPR033708">
    <property type="entry name" value="Anticodon_Ile_BEm"/>
</dbReference>
<dbReference type="InterPro" id="IPR002301">
    <property type="entry name" value="Ile-tRNA-ligase"/>
</dbReference>
<dbReference type="InterPro" id="IPR023585">
    <property type="entry name" value="Ile-tRNA-ligase_type1"/>
</dbReference>
<dbReference type="InterPro" id="IPR050081">
    <property type="entry name" value="Ile-tRNA_ligase"/>
</dbReference>
<dbReference type="InterPro" id="IPR013155">
    <property type="entry name" value="M/V/L/I-tRNA-synth_anticd-bd"/>
</dbReference>
<dbReference type="InterPro" id="IPR014729">
    <property type="entry name" value="Rossmann-like_a/b/a_fold"/>
</dbReference>
<dbReference type="InterPro" id="IPR009080">
    <property type="entry name" value="tRNAsynth_Ia_anticodon-bd"/>
</dbReference>
<dbReference type="InterPro" id="IPR009008">
    <property type="entry name" value="Val/Leu/Ile-tRNA-synth_edit"/>
</dbReference>
<dbReference type="InterPro" id="IPR010663">
    <property type="entry name" value="Znf_FPG/IleRS"/>
</dbReference>
<dbReference type="NCBIfam" id="TIGR00392">
    <property type="entry name" value="ileS"/>
    <property type="match status" value="1"/>
</dbReference>
<dbReference type="PANTHER" id="PTHR42765:SF1">
    <property type="entry name" value="ISOLEUCINE--TRNA LIGASE, MITOCHONDRIAL"/>
    <property type="match status" value="1"/>
</dbReference>
<dbReference type="PANTHER" id="PTHR42765">
    <property type="entry name" value="SOLEUCYL-TRNA SYNTHETASE"/>
    <property type="match status" value="1"/>
</dbReference>
<dbReference type="Pfam" id="PF08264">
    <property type="entry name" value="Anticodon_1"/>
    <property type="match status" value="1"/>
</dbReference>
<dbReference type="Pfam" id="PF00133">
    <property type="entry name" value="tRNA-synt_1"/>
    <property type="match status" value="1"/>
</dbReference>
<dbReference type="Pfam" id="PF06827">
    <property type="entry name" value="zf-FPG_IleRS"/>
    <property type="match status" value="1"/>
</dbReference>
<dbReference type="PRINTS" id="PR00984">
    <property type="entry name" value="TRNASYNTHILE"/>
</dbReference>
<dbReference type="SUPFAM" id="SSF47323">
    <property type="entry name" value="Anticodon-binding domain of a subclass of class I aminoacyl-tRNA synthetases"/>
    <property type="match status" value="1"/>
</dbReference>
<dbReference type="SUPFAM" id="SSF52374">
    <property type="entry name" value="Nucleotidylyl transferase"/>
    <property type="match status" value="1"/>
</dbReference>
<dbReference type="SUPFAM" id="SSF50677">
    <property type="entry name" value="ValRS/IleRS/LeuRS editing domain"/>
    <property type="match status" value="1"/>
</dbReference>
<dbReference type="PROSITE" id="PS00178">
    <property type="entry name" value="AA_TRNA_LIGASE_I"/>
    <property type="match status" value="1"/>
</dbReference>
<gene>
    <name evidence="1" type="primary">ileS</name>
    <name type="ordered locus">APP7_0044</name>
</gene>
<reference key="1">
    <citation type="submission" date="2008-06" db="EMBL/GenBank/DDBJ databases">
        <title>Genome and proteome analysis of A. pleuropneumoniae serotype 7.</title>
        <authorList>
            <person name="Linke B."/>
            <person name="Buettner F."/>
            <person name="Martinez-Arias R."/>
            <person name="Goesmann A."/>
            <person name="Baltes N."/>
            <person name="Tegetmeyer H."/>
            <person name="Singh M."/>
            <person name="Gerlach G.F."/>
        </authorList>
    </citation>
    <scope>NUCLEOTIDE SEQUENCE [LARGE SCALE GENOMIC DNA]</scope>
    <source>
        <strain>AP76</strain>
    </source>
</reference>
<keyword id="KW-0030">Aminoacyl-tRNA synthetase</keyword>
<keyword id="KW-0067">ATP-binding</keyword>
<keyword id="KW-0963">Cytoplasm</keyword>
<keyword id="KW-0436">Ligase</keyword>
<keyword id="KW-0479">Metal-binding</keyword>
<keyword id="KW-0547">Nucleotide-binding</keyword>
<keyword id="KW-0648">Protein biosynthesis</keyword>
<keyword id="KW-0862">Zinc</keyword>
<proteinExistence type="inferred from homology"/>
<feature type="chain" id="PRO_1000189118" description="Isoleucine--tRNA ligase">
    <location>
        <begin position="1"/>
        <end position="938"/>
    </location>
</feature>
<feature type="short sequence motif" description="'HIGH' region">
    <location>
        <begin position="58"/>
        <end position="68"/>
    </location>
</feature>
<feature type="short sequence motif" description="'KMSKS' region">
    <location>
        <begin position="603"/>
        <end position="607"/>
    </location>
</feature>
<feature type="binding site" evidence="1">
    <location>
        <position position="562"/>
    </location>
    <ligand>
        <name>L-isoleucyl-5'-AMP</name>
        <dbReference type="ChEBI" id="CHEBI:178002"/>
    </ligand>
</feature>
<feature type="binding site" evidence="1">
    <location>
        <position position="606"/>
    </location>
    <ligand>
        <name>ATP</name>
        <dbReference type="ChEBI" id="CHEBI:30616"/>
    </ligand>
</feature>
<feature type="binding site" evidence="1">
    <location>
        <position position="901"/>
    </location>
    <ligand>
        <name>Zn(2+)</name>
        <dbReference type="ChEBI" id="CHEBI:29105"/>
    </ligand>
</feature>
<feature type="binding site" evidence="1">
    <location>
        <position position="904"/>
    </location>
    <ligand>
        <name>Zn(2+)</name>
        <dbReference type="ChEBI" id="CHEBI:29105"/>
    </ligand>
</feature>
<feature type="binding site" evidence="1">
    <location>
        <position position="921"/>
    </location>
    <ligand>
        <name>Zn(2+)</name>
        <dbReference type="ChEBI" id="CHEBI:29105"/>
    </ligand>
</feature>
<feature type="binding site" evidence="1">
    <location>
        <position position="924"/>
    </location>
    <ligand>
        <name>Zn(2+)</name>
        <dbReference type="ChEBI" id="CHEBI:29105"/>
    </ligand>
</feature>
<protein>
    <recommendedName>
        <fullName evidence="1">Isoleucine--tRNA ligase</fullName>
        <ecNumber evidence="1">6.1.1.5</ecNumber>
    </recommendedName>
    <alternativeName>
        <fullName evidence="1">Isoleucyl-tRNA synthetase</fullName>
        <shortName evidence="1">IleRS</shortName>
    </alternativeName>
</protein>
<organism>
    <name type="scientific">Actinobacillus pleuropneumoniae serotype 7 (strain AP76)</name>
    <dbReference type="NCBI Taxonomy" id="537457"/>
    <lineage>
        <taxon>Bacteria</taxon>
        <taxon>Pseudomonadati</taxon>
        <taxon>Pseudomonadota</taxon>
        <taxon>Gammaproteobacteria</taxon>
        <taxon>Pasteurellales</taxon>
        <taxon>Pasteurellaceae</taxon>
        <taxon>Actinobacillus</taxon>
    </lineage>
</organism>
<accession>B3GZN4</accession>
<name>SYI_ACTP7</name>